<evidence type="ECO:0000255" key="1">
    <source>
        <dbReference type="HAMAP-Rule" id="MF_00394"/>
    </source>
</evidence>
<gene>
    <name evidence="1" type="primary">gpsA</name>
    <name type="ordered locus">gbs0442</name>
</gene>
<comment type="function">
    <text evidence="1">Catalyzes the reduction of the glycolytic intermediate dihydroxyacetone phosphate (DHAP) to sn-glycerol 3-phosphate (G3P), the key precursor for phospholipid synthesis.</text>
</comment>
<comment type="catalytic activity">
    <reaction evidence="1">
        <text>sn-glycerol 3-phosphate + NAD(+) = dihydroxyacetone phosphate + NADH + H(+)</text>
        <dbReference type="Rhea" id="RHEA:11092"/>
        <dbReference type="ChEBI" id="CHEBI:15378"/>
        <dbReference type="ChEBI" id="CHEBI:57540"/>
        <dbReference type="ChEBI" id="CHEBI:57597"/>
        <dbReference type="ChEBI" id="CHEBI:57642"/>
        <dbReference type="ChEBI" id="CHEBI:57945"/>
        <dbReference type="EC" id="1.1.1.94"/>
    </reaction>
    <physiologicalReaction direction="right-to-left" evidence="1">
        <dbReference type="Rhea" id="RHEA:11094"/>
    </physiologicalReaction>
</comment>
<comment type="catalytic activity">
    <reaction evidence="1">
        <text>sn-glycerol 3-phosphate + NADP(+) = dihydroxyacetone phosphate + NADPH + H(+)</text>
        <dbReference type="Rhea" id="RHEA:11096"/>
        <dbReference type="ChEBI" id="CHEBI:15378"/>
        <dbReference type="ChEBI" id="CHEBI:57597"/>
        <dbReference type="ChEBI" id="CHEBI:57642"/>
        <dbReference type="ChEBI" id="CHEBI:57783"/>
        <dbReference type="ChEBI" id="CHEBI:58349"/>
        <dbReference type="EC" id="1.1.1.94"/>
    </reaction>
    <physiologicalReaction direction="right-to-left" evidence="1">
        <dbReference type="Rhea" id="RHEA:11098"/>
    </physiologicalReaction>
</comment>
<comment type="pathway">
    <text evidence="1">Membrane lipid metabolism; glycerophospholipid metabolism.</text>
</comment>
<comment type="subcellular location">
    <subcellularLocation>
        <location evidence="1">Cytoplasm</location>
    </subcellularLocation>
</comment>
<comment type="similarity">
    <text evidence="1">Belongs to the NAD-dependent glycerol-3-phosphate dehydrogenase family.</text>
</comment>
<organism>
    <name type="scientific">Streptococcus agalactiae serotype III (strain NEM316)</name>
    <dbReference type="NCBI Taxonomy" id="211110"/>
    <lineage>
        <taxon>Bacteria</taxon>
        <taxon>Bacillati</taxon>
        <taxon>Bacillota</taxon>
        <taxon>Bacilli</taxon>
        <taxon>Lactobacillales</taxon>
        <taxon>Streptococcaceae</taxon>
        <taxon>Streptococcus</taxon>
    </lineage>
</organism>
<protein>
    <recommendedName>
        <fullName evidence="1">Glycerol-3-phosphate dehydrogenase [NAD(P)+]</fullName>
        <ecNumber evidence="1">1.1.1.94</ecNumber>
    </recommendedName>
    <alternativeName>
        <fullName evidence="1">NAD(P)(+)-dependent glycerol-3-phosphate dehydrogenase</fullName>
    </alternativeName>
    <alternativeName>
        <fullName evidence="1">NAD(P)H-dependent dihydroxyacetone-phosphate reductase</fullName>
    </alternativeName>
</protein>
<sequence>MTKQKIAVLGPGSWGTALAQVLNDNGHEVRLWGNVVEQIEEINTSHTNQRYFKDITLDSKIKAYTNLEEAINNVDSILFVVPTKVTRLVAKQVANLLKHKVVIMHASKGLEPGTHERLSTILEEEISEQYRSDIVVVSGPSHAEEAIVRDITLITAASKDIGAAKYVQKLFSNHYFRLYTNTDVVGVETAGALKNIIAVGAGALHGLGYGDNAKAAIITRGLAEITRLGVQLGADPLTFSGLSGVGDLIVTGTSVHSRNWRAGDALGRGEKLEDIEKNMGMVIEGISTTKVAYEIAQNLNVYMPITEAIYKSIYEGANIKDSILDMMSNEFRSENEWH</sequence>
<keyword id="KW-0963">Cytoplasm</keyword>
<keyword id="KW-0444">Lipid biosynthesis</keyword>
<keyword id="KW-0443">Lipid metabolism</keyword>
<keyword id="KW-0520">NAD</keyword>
<keyword id="KW-0521">NADP</keyword>
<keyword id="KW-0547">Nucleotide-binding</keyword>
<keyword id="KW-0560">Oxidoreductase</keyword>
<keyword id="KW-0594">Phospholipid biosynthesis</keyword>
<keyword id="KW-1208">Phospholipid metabolism</keyword>
<dbReference type="EC" id="1.1.1.94" evidence="1"/>
<dbReference type="EMBL" id="AL766845">
    <property type="protein sequence ID" value="CAD46086.1"/>
    <property type="molecule type" value="Genomic_DNA"/>
</dbReference>
<dbReference type="RefSeq" id="WP_000166111.1">
    <property type="nucleotide sequence ID" value="NC_004368.1"/>
</dbReference>
<dbReference type="SMR" id="Q8E6W6"/>
<dbReference type="KEGG" id="san:gbs0442"/>
<dbReference type="eggNOG" id="COG0240">
    <property type="taxonomic scope" value="Bacteria"/>
</dbReference>
<dbReference type="HOGENOM" id="CLU_033449_0_2_9"/>
<dbReference type="UniPathway" id="UPA00940"/>
<dbReference type="Proteomes" id="UP000000823">
    <property type="component" value="Chromosome"/>
</dbReference>
<dbReference type="GO" id="GO:0005829">
    <property type="term" value="C:cytosol"/>
    <property type="evidence" value="ECO:0007669"/>
    <property type="project" value="TreeGrafter"/>
</dbReference>
<dbReference type="GO" id="GO:0047952">
    <property type="term" value="F:glycerol-3-phosphate dehydrogenase [NAD(P)+] activity"/>
    <property type="evidence" value="ECO:0007669"/>
    <property type="project" value="UniProtKB-UniRule"/>
</dbReference>
<dbReference type="GO" id="GO:0051287">
    <property type="term" value="F:NAD binding"/>
    <property type="evidence" value="ECO:0007669"/>
    <property type="project" value="InterPro"/>
</dbReference>
<dbReference type="GO" id="GO:0005975">
    <property type="term" value="P:carbohydrate metabolic process"/>
    <property type="evidence" value="ECO:0007669"/>
    <property type="project" value="InterPro"/>
</dbReference>
<dbReference type="GO" id="GO:0046167">
    <property type="term" value="P:glycerol-3-phosphate biosynthetic process"/>
    <property type="evidence" value="ECO:0007669"/>
    <property type="project" value="UniProtKB-UniRule"/>
</dbReference>
<dbReference type="GO" id="GO:0046168">
    <property type="term" value="P:glycerol-3-phosphate catabolic process"/>
    <property type="evidence" value="ECO:0007669"/>
    <property type="project" value="InterPro"/>
</dbReference>
<dbReference type="GO" id="GO:0006650">
    <property type="term" value="P:glycerophospholipid metabolic process"/>
    <property type="evidence" value="ECO:0007669"/>
    <property type="project" value="UniProtKB-UniRule"/>
</dbReference>
<dbReference type="GO" id="GO:0008654">
    <property type="term" value="P:phospholipid biosynthetic process"/>
    <property type="evidence" value="ECO:0007669"/>
    <property type="project" value="UniProtKB-KW"/>
</dbReference>
<dbReference type="FunFam" id="1.10.1040.10:FF:000001">
    <property type="entry name" value="Glycerol-3-phosphate dehydrogenase [NAD(P)+]"/>
    <property type="match status" value="1"/>
</dbReference>
<dbReference type="FunFam" id="3.40.50.720:FF:000019">
    <property type="entry name" value="Glycerol-3-phosphate dehydrogenase [NAD(P)+]"/>
    <property type="match status" value="1"/>
</dbReference>
<dbReference type="Gene3D" id="1.10.1040.10">
    <property type="entry name" value="N-(1-d-carboxylethyl)-l-norvaline Dehydrogenase, domain 2"/>
    <property type="match status" value="1"/>
</dbReference>
<dbReference type="Gene3D" id="3.40.50.720">
    <property type="entry name" value="NAD(P)-binding Rossmann-like Domain"/>
    <property type="match status" value="1"/>
</dbReference>
<dbReference type="HAMAP" id="MF_00394">
    <property type="entry name" value="NAD_Glyc3P_dehydrog"/>
    <property type="match status" value="1"/>
</dbReference>
<dbReference type="InterPro" id="IPR008927">
    <property type="entry name" value="6-PGluconate_DH-like_C_sf"/>
</dbReference>
<dbReference type="InterPro" id="IPR013328">
    <property type="entry name" value="6PGD_dom2"/>
</dbReference>
<dbReference type="InterPro" id="IPR006168">
    <property type="entry name" value="G3P_DH_NAD-dep"/>
</dbReference>
<dbReference type="InterPro" id="IPR006109">
    <property type="entry name" value="G3P_DH_NAD-dep_C"/>
</dbReference>
<dbReference type="InterPro" id="IPR011128">
    <property type="entry name" value="G3P_DH_NAD-dep_N"/>
</dbReference>
<dbReference type="InterPro" id="IPR036291">
    <property type="entry name" value="NAD(P)-bd_dom_sf"/>
</dbReference>
<dbReference type="NCBIfam" id="NF000940">
    <property type="entry name" value="PRK00094.1-2"/>
    <property type="match status" value="1"/>
</dbReference>
<dbReference type="NCBIfam" id="NF000941">
    <property type="entry name" value="PRK00094.1-3"/>
    <property type="match status" value="1"/>
</dbReference>
<dbReference type="NCBIfam" id="NF000942">
    <property type="entry name" value="PRK00094.1-4"/>
    <property type="match status" value="1"/>
</dbReference>
<dbReference type="PANTHER" id="PTHR11728">
    <property type="entry name" value="GLYCEROL-3-PHOSPHATE DEHYDROGENASE"/>
    <property type="match status" value="1"/>
</dbReference>
<dbReference type="PANTHER" id="PTHR11728:SF1">
    <property type="entry name" value="GLYCEROL-3-PHOSPHATE DEHYDROGENASE [NAD(+)] 2, CHLOROPLASTIC"/>
    <property type="match status" value="1"/>
</dbReference>
<dbReference type="Pfam" id="PF07479">
    <property type="entry name" value="NAD_Gly3P_dh_C"/>
    <property type="match status" value="1"/>
</dbReference>
<dbReference type="Pfam" id="PF01210">
    <property type="entry name" value="NAD_Gly3P_dh_N"/>
    <property type="match status" value="1"/>
</dbReference>
<dbReference type="PIRSF" id="PIRSF000114">
    <property type="entry name" value="Glycerol-3-P_dh"/>
    <property type="match status" value="1"/>
</dbReference>
<dbReference type="PRINTS" id="PR00077">
    <property type="entry name" value="GPDHDRGNASE"/>
</dbReference>
<dbReference type="SUPFAM" id="SSF48179">
    <property type="entry name" value="6-phosphogluconate dehydrogenase C-terminal domain-like"/>
    <property type="match status" value="1"/>
</dbReference>
<dbReference type="SUPFAM" id="SSF51735">
    <property type="entry name" value="NAD(P)-binding Rossmann-fold domains"/>
    <property type="match status" value="1"/>
</dbReference>
<dbReference type="PROSITE" id="PS00957">
    <property type="entry name" value="NAD_G3PDH"/>
    <property type="match status" value="1"/>
</dbReference>
<reference key="1">
    <citation type="journal article" date="2002" name="Mol. Microbiol.">
        <title>Genome sequence of Streptococcus agalactiae, a pathogen causing invasive neonatal disease.</title>
        <authorList>
            <person name="Glaser P."/>
            <person name="Rusniok C."/>
            <person name="Buchrieser C."/>
            <person name="Chevalier F."/>
            <person name="Frangeul L."/>
            <person name="Msadek T."/>
            <person name="Zouine M."/>
            <person name="Couve E."/>
            <person name="Lalioui L."/>
            <person name="Poyart C."/>
            <person name="Trieu-Cuot P."/>
            <person name="Kunst F."/>
        </authorList>
    </citation>
    <scope>NUCLEOTIDE SEQUENCE [LARGE SCALE GENOMIC DNA]</scope>
    <source>
        <strain>NEM316</strain>
    </source>
</reference>
<accession>Q8E6W6</accession>
<proteinExistence type="inferred from homology"/>
<name>GPDA_STRA3</name>
<feature type="chain" id="PRO_0000138033" description="Glycerol-3-phosphate dehydrogenase [NAD(P)+]">
    <location>
        <begin position="1"/>
        <end position="338"/>
    </location>
</feature>
<feature type="active site" description="Proton acceptor" evidence="1">
    <location>
        <position position="194"/>
    </location>
</feature>
<feature type="binding site" evidence="1">
    <location>
        <position position="13"/>
    </location>
    <ligand>
        <name>NADPH</name>
        <dbReference type="ChEBI" id="CHEBI:57783"/>
    </ligand>
</feature>
<feature type="binding site" evidence="1">
    <location>
        <position position="14"/>
    </location>
    <ligand>
        <name>NADPH</name>
        <dbReference type="ChEBI" id="CHEBI:57783"/>
    </ligand>
</feature>
<feature type="binding site" evidence="1">
    <location>
        <position position="108"/>
    </location>
    <ligand>
        <name>NADPH</name>
        <dbReference type="ChEBI" id="CHEBI:57783"/>
    </ligand>
</feature>
<feature type="binding site" evidence="1">
    <location>
        <position position="108"/>
    </location>
    <ligand>
        <name>sn-glycerol 3-phosphate</name>
        <dbReference type="ChEBI" id="CHEBI:57597"/>
    </ligand>
</feature>
<feature type="binding site" evidence="1">
    <location>
        <position position="139"/>
    </location>
    <ligand>
        <name>sn-glycerol 3-phosphate</name>
        <dbReference type="ChEBI" id="CHEBI:57597"/>
    </ligand>
</feature>
<feature type="binding site" evidence="1">
    <location>
        <position position="141"/>
    </location>
    <ligand>
        <name>sn-glycerol 3-phosphate</name>
        <dbReference type="ChEBI" id="CHEBI:57597"/>
    </ligand>
</feature>
<feature type="binding site" evidence="1">
    <location>
        <position position="143"/>
    </location>
    <ligand>
        <name>NADPH</name>
        <dbReference type="ChEBI" id="CHEBI:57783"/>
    </ligand>
</feature>
<feature type="binding site" evidence="1">
    <location>
        <position position="194"/>
    </location>
    <ligand>
        <name>sn-glycerol 3-phosphate</name>
        <dbReference type="ChEBI" id="CHEBI:57597"/>
    </ligand>
</feature>
<feature type="binding site" evidence="1">
    <location>
        <position position="247"/>
    </location>
    <ligand>
        <name>sn-glycerol 3-phosphate</name>
        <dbReference type="ChEBI" id="CHEBI:57597"/>
    </ligand>
</feature>
<feature type="binding site" evidence="1">
    <location>
        <position position="257"/>
    </location>
    <ligand>
        <name>sn-glycerol 3-phosphate</name>
        <dbReference type="ChEBI" id="CHEBI:57597"/>
    </ligand>
</feature>
<feature type="binding site" evidence="1">
    <location>
        <position position="258"/>
    </location>
    <ligand>
        <name>NADPH</name>
        <dbReference type="ChEBI" id="CHEBI:57783"/>
    </ligand>
</feature>
<feature type="binding site" evidence="1">
    <location>
        <position position="258"/>
    </location>
    <ligand>
        <name>sn-glycerol 3-phosphate</name>
        <dbReference type="ChEBI" id="CHEBI:57597"/>
    </ligand>
</feature>
<feature type="binding site" evidence="1">
    <location>
        <position position="259"/>
    </location>
    <ligand>
        <name>sn-glycerol 3-phosphate</name>
        <dbReference type="ChEBI" id="CHEBI:57597"/>
    </ligand>
</feature>
<feature type="binding site" evidence="1">
    <location>
        <position position="282"/>
    </location>
    <ligand>
        <name>NADPH</name>
        <dbReference type="ChEBI" id="CHEBI:57783"/>
    </ligand>
</feature>
<feature type="binding site" evidence="1">
    <location>
        <position position="284"/>
    </location>
    <ligand>
        <name>NADPH</name>
        <dbReference type="ChEBI" id="CHEBI:57783"/>
    </ligand>
</feature>